<comment type="function">
    <text evidence="1">One of the primary rRNA binding proteins, it binds directly to 16S rRNA central domain where it helps coordinate assembly of the platform of the 30S subunit.</text>
</comment>
<comment type="subunit">
    <text evidence="1">Part of the 30S ribosomal subunit.</text>
</comment>
<comment type="similarity">
    <text evidence="1">Belongs to the universal ribosomal protein uS8 family.</text>
</comment>
<accession>A9A9P9</accession>
<sequence length="130" mass="14281">MSLMDPLANALNHVSNCESVGKNVAYLKPASKLIGRVLNVMQDQGYIGNFEYIEDGKAGVYKVDLIGQINKCGAVKPRFAVKNHDFEKFEKRYLPAKGFGLLIVSTPKGLMTHDEARSAGVGGRLISYIY</sequence>
<keyword id="KW-0687">Ribonucleoprotein</keyword>
<keyword id="KW-0689">Ribosomal protein</keyword>
<keyword id="KW-0694">RNA-binding</keyword>
<keyword id="KW-0699">rRNA-binding</keyword>
<feature type="chain" id="PRO_1000140580" description="Small ribosomal subunit protein uS8">
    <location>
        <begin position="1"/>
        <end position="130"/>
    </location>
</feature>
<dbReference type="EMBL" id="CP000867">
    <property type="protein sequence ID" value="ABX02072.1"/>
    <property type="molecule type" value="Genomic_DNA"/>
</dbReference>
<dbReference type="SMR" id="A9A9P9"/>
<dbReference type="STRING" id="444158.MmarC6_1259"/>
<dbReference type="KEGG" id="mmx:MmarC6_1259"/>
<dbReference type="eggNOG" id="arCOG04091">
    <property type="taxonomic scope" value="Archaea"/>
</dbReference>
<dbReference type="HOGENOM" id="CLU_098428_1_1_2"/>
<dbReference type="OrthoDB" id="5670at2157"/>
<dbReference type="PhylomeDB" id="A9A9P9"/>
<dbReference type="GO" id="GO:1990904">
    <property type="term" value="C:ribonucleoprotein complex"/>
    <property type="evidence" value="ECO:0007669"/>
    <property type="project" value="UniProtKB-KW"/>
</dbReference>
<dbReference type="GO" id="GO:0005840">
    <property type="term" value="C:ribosome"/>
    <property type="evidence" value="ECO:0007669"/>
    <property type="project" value="UniProtKB-KW"/>
</dbReference>
<dbReference type="GO" id="GO:0019843">
    <property type="term" value="F:rRNA binding"/>
    <property type="evidence" value="ECO:0007669"/>
    <property type="project" value="UniProtKB-UniRule"/>
</dbReference>
<dbReference type="GO" id="GO:0003735">
    <property type="term" value="F:structural constituent of ribosome"/>
    <property type="evidence" value="ECO:0007669"/>
    <property type="project" value="InterPro"/>
</dbReference>
<dbReference type="GO" id="GO:0006412">
    <property type="term" value="P:translation"/>
    <property type="evidence" value="ECO:0007669"/>
    <property type="project" value="UniProtKB-UniRule"/>
</dbReference>
<dbReference type="FunFam" id="3.30.1370.30:FF:000001">
    <property type="entry name" value="40S ribosomal protein S15a"/>
    <property type="match status" value="1"/>
</dbReference>
<dbReference type="Gene3D" id="3.30.1370.30">
    <property type="match status" value="1"/>
</dbReference>
<dbReference type="Gene3D" id="3.30.1490.10">
    <property type="match status" value="1"/>
</dbReference>
<dbReference type="HAMAP" id="MF_01302_A">
    <property type="entry name" value="Ribosomal_uS8_A"/>
    <property type="match status" value="1"/>
</dbReference>
<dbReference type="InterPro" id="IPR000630">
    <property type="entry name" value="Ribosomal_uS8"/>
</dbReference>
<dbReference type="InterPro" id="IPR047863">
    <property type="entry name" value="Ribosomal_uS8_CS"/>
</dbReference>
<dbReference type="InterPro" id="IPR035987">
    <property type="entry name" value="Ribosomal_uS8_sf"/>
</dbReference>
<dbReference type="NCBIfam" id="NF003115">
    <property type="entry name" value="PRK04034.1"/>
    <property type="match status" value="1"/>
</dbReference>
<dbReference type="PANTHER" id="PTHR11758">
    <property type="entry name" value="40S RIBOSOMAL PROTEIN S15A"/>
    <property type="match status" value="1"/>
</dbReference>
<dbReference type="Pfam" id="PF00410">
    <property type="entry name" value="Ribosomal_S8"/>
    <property type="match status" value="1"/>
</dbReference>
<dbReference type="SUPFAM" id="SSF56047">
    <property type="entry name" value="Ribosomal protein S8"/>
    <property type="match status" value="1"/>
</dbReference>
<dbReference type="PROSITE" id="PS00053">
    <property type="entry name" value="RIBOSOMAL_S8"/>
    <property type="match status" value="1"/>
</dbReference>
<evidence type="ECO:0000255" key="1">
    <source>
        <dbReference type="HAMAP-Rule" id="MF_01302"/>
    </source>
</evidence>
<evidence type="ECO:0000305" key="2"/>
<reference key="1">
    <citation type="submission" date="2007-10" db="EMBL/GenBank/DDBJ databases">
        <title>Complete sequence of Methanococcus maripaludis C6.</title>
        <authorList>
            <consortium name="US DOE Joint Genome Institute"/>
            <person name="Copeland A."/>
            <person name="Lucas S."/>
            <person name="Lapidus A."/>
            <person name="Barry K."/>
            <person name="Glavina del Rio T."/>
            <person name="Dalin E."/>
            <person name="Tice H."/>
            <person name="Pitluck S."/>
            <person name="Clum A."/>
            <person name="Schmutz J."/>
            <person name="Larimer F."/>
            <person name="Land M."/>
            <person name="Hauser L."/>
            <person name="Kyrpides N."/>
            <person name="Mikhailova N."/>
            <person name="Sieprawska-Lupa M."/>
            <person name="Whitman W.B."/>
            <person name="Richardson P."/>
        </authorList>
    </citation>
    <scope>NUCLEOTIDE SEQUENCE [LARGE SCALE GENOMIC DNA]</scope>
    <source>
        <strain>C6 / ATCC BAA-1332</strain>
    </source>
</reference>
<proteinExistence type="inferred from homology"/>
<protein>
    <recommendedName>
        <fullName evidence="1">Small ribosomal subunit protein uS8</fullName>
    </recommendedName>
    <alternativeName>
        <fullName evidence="2">30S ribosomal protein S8</fullName>
    </alternativeName>
</protein>
<gene>
    <name evidence="1" type="primary">rps8</name>
    <name type="ordered locus">MmarC6_1259</name>
</gene>
<organism>
    <name type="scientific">Methanococcus maripaludis (strain C6 / ATCC BAA-1332)</name>
    <dbReference type="NCBI Taxonomy" id="444158"/>
    <lineage>
        <taxon>Archaea</taxon>
        <taxon>Methanobacteriati</taxon>
        <taxon>Methanobacteriota</taxon>
        <taxon>Methanomada group</taxon>
        <taxon>Methanococci</taxon>
        <taxon>Methanococcales</taxon>
        <taxon>Methanococcaceae</taxon>
        <taxon>Methanococcus</taxon>
    </lineage>
</organism>
<name>RS8_METM6</name>